<gene>
    <name type="ordered locus">MGAS9429_Spy0306</name>
</gene>
<feature type="chain" id="PRO_1000070256" description="Tyrosine recombinase XerD-like">
    <location>
        <begin position="1"/>
        <end position="248"/>
    </location>
</feature>
<feature type="domain" description="Core-binding (CB)" evidence="3">
    <location>
        <begin position="1"/>
        <end position="72"/>
    </location>
</feature>
<feature type="domain" description="Tyr recombinase" evidence="2">
    <location>
        <begin position="85"/>
        <end position="248"/>
    </location>
</feature>
<feature type="active site" evidence="2">
    <location>
        <position position="149"/>
    </location>
</feature>
<feature type="active site" evidence="2">
    <location>
        <position position="213"/>
    </location>
</feature>
<feature type="active site" description="O-(3'-phospho-DNA)-tyrosine intermediate" evidence="2">
    <location>
        <position position="245"/>
    </location>
</feature>
<dbReference type="EMBL" id="CP000259">
    <property type="protein sequence ID" value="ABF31494.1"/>
    <property type="molecule type" value="Genomic_DNA"/>
</dbReference>
<dbReference type="SMR" id="Q1JNA5"/>
<dbReference type="KEGG" id="spk:MGAS9429_Spy0306"/>
<dbReference type="HOGENOM" id="CLU_1128554_0_0_9"/>
<dbReference type="Proteomes" id="UP000002433">
    <property type="component" value="Chromosome"/>
</dbReference>
<dbReference type="GO" id="GO:0005737">
    <property type="term" value="C:cytoplasm"/>
    <property type="evidence" value="ECO:0007669"/>
    <property type="project" value="UniProtKB-SubCell"/>
</dbReference>
<dbReference type="GO" id="GO:0003677">
    <property type="term" value="F:DNA binding"/>
    <property type="evidence" value="ECO:0007669"/>
    <property type="project" value="UniProtKB-KW"/>
</dbReference>
<dbReference type="GO" id="GO:0009037">
    <property type="term" value="F:tyrosine-based site-specific recombinase activity"/>
    <property type="evidence" value="ECO:0007669"/>
    <property type="project" value="UniProtKB-UniRule"/>
</dbReference>
<dbReference type="GO" id="GO:0006313">
    <property type="term" value="P:DNA transposition"/>
    <property type="evidence" value="ECO:0007669"/>
    <property type="project" value="UniProtKB-UniRule"/>
</dbReference>
<dbReference type="CDD" id="cd01190">
    <property type="entry name" value="INT_StrepXerD_C_like"/>
    <property type="match status" value="1"/>
</dbReference>
<dbReference type="Gene3D" id="1.10.150.130">
    <property type="match status" value="1"/>
</dbReference>
<dbReference type="Gene3D" id="1.10.443.10">
    <property type="entry name" value="Intergrase catalytic core"/>
    <property type="match status" value="1"/>
</dbReference>
<dbReference type="HAMAP" id="MF_01817">
    <property type="entry name" value="Recomb_XerD_like"/>
    <property type="match status" value="1"/>
</dbReference>
<dbReference type="InterPro" id="IPR044068">
    <property type="entry name" value="CB"/>
</dbReference>
<dbReference type="InterPro" id="IPR011010">
    <property type="entry name" value="DNA_brk_join_enz"/>
</dbReference>
<dbReference type="InterPro" id="IPR013762">
    <property type="entry name" value="Integrase-like_cat_sf"/>
</dbReference>
<dbReference type="InterPro" id="IPR002104">
    <property type="entry name" value="Integrase_catalytic"/>
</dbReference>
<dbReference type="InterPro" id="IPR010998">
    <property type="entry name" value="Integrase_recombinase_N"/>
</dbReference>
<dbReference type="InterPro" id="IPR020876">
    <property type="entry name" value="Tyrosine_recombinase_XerD-like"/>
</dbReference>
<dbReference type="NCBIfam" id="NF002685">
    <property type="entry name" value="PRK02436.1"/>
    <property type="match status" value="1"/>
</dbReference>
<dbReference type="SUPFAM" id="SSF56349">
    <property type="entry name" value="DNA breaking-rejoining enzymes"/>
    <property type="match status" value="1"/>
</dbReference>
<dbReference type="PROSITE" id="PS51900">
    <property type="entry name" value="CB"/>
    <property type="match status" value="1"/>
</dbReference>
<dbReference type="PROSITE" id="PS51898">
    <property type="entry name" value="TYR_RECOMBINASE"/>
    <property type="match status" value="1"/>
</dbReference>
<name>XERDL_STRPC</name>
<reference key="1">
    <citation type="journal article" date="2006" name="Proc. Natl. Acad. Sci. U.S.A.">
        <title>Molecular genetic anatomy of inter- and intraserotype variation in the human bacterial pathogen group A Streptococcus.</title>
        <authorList>
            <person name="Beres S.B."/>
            <person name="Richter E.W."/>
            <person name="Nagiec M.J."/>
            <person name="Sumby P."/>
            <person name="Porcella S.F."/>
            <person name="DeLeo F.R."/>
            <person name="Musser J.M."/>
        </authorList>
    </citation>
    <scope>NUCLEOTIDE SEQUENCE [LARGE SCALE GENOMIC DNA]</scope>
    <source>
        <strain>MGAS9429</strain>
    </source>
</reference>
<protein>
    <recommendedName>
        <fullName evidence="1">Tyrosine recombinase XerD-like</fullName>
    </recommendedName>
</protein>
<evidence type="ECO:0000255" key="1">
    <source>
        <dbReference type="HAMAP-Rule" id="MF_01817"/>
    </source>
</evidence>
<evidence type="ECO:0000255" key="2">
    <source>
        <dbReference type="PROSITE-ProRule" id="PRU01246"/>
    </source>
</evidence>
<evidence type="ECO:0000255" key="3">
    <source>
        <dbReference type="PROSITE-ProRule" id="PRU01248"/>
    </source>
</evidence>
<accession>Q1JNA5</accession>
<organism>
    <name type="scientific">Streptococcus pyogenes serotype M12 (strain MGAS9429)</name>
    <dbReference type="NCBI Taxonomy" id="370551"/>
    <lineage>
        <taxon>Bacteria</taxon>
        <taxon>Bacillati</taxon>
        <taxon>Bacillota</taxon>
        <taxon>Bacilli</taxon>
        <taxon>Lactobacillales</taxon>
        <taxon>Streptococcaceae</taxon>
        <taxon>Streptococcus</taxon>
    </lineage>
</organism>
<sequence length="248" mass="28817">MKSYIEPFIASKALSQNSQKAYRYDLQQFCQLVGERVNQDKLLLYQNSIANLSLSAKKRKLSTANQFLYYLYQIKYLNSYFRLTDTMKVMRTEKQQAAIINTDIFYQKTPFVWGQLISLLILELGLTPSEVAGIEVANLDLNFQMLTLKTKKGVRVLPLSQILIPFLEQQLVGKEVYLFEHRGIPFSRQWFFNHLKTFVRSIGYEGLTAQKLREQFILKEKLAGKSIIELSDILGLKSPVTLEKYYKS</sequence>
<keyword id="KW-0963">Cytoplasm</keyword>
<keyword id="KW-0229">DNA integration</keyword>
<keyword id="KW-0233">DNA recombination</keyword>
<keyword id="KW-0238">DNA-binding</keyword>
<proteinExistence type="inferred from homology"/>
<comment type="function">
    <text evidence="1">Putative tyrosine recombinase. Not involved in the cutting and rejoining of the recombining DNA molecules on dif(SL) site.</text>
</comment>
<comment type="subcellular location">
    <subcellularLocation>
        <location evidence="1">Cytoplasm</location>
    </subcellularLocation>
</comment>
<comment type="similarity">
    <text evidence="1">Belongs to the 'phage' integrase family. XerD-like subfamily.</text>
</comment>